<protein>
    <recommendedName>
        <fullName>Putative uncharacterized protein ycf15</fullName>
    </recommendedName>
    <alternativeName>
        <fullName>Orf77</fullName>
    </alternativeName>
</protein>
<comment type="subcellular location">
    <subcellularLocation>
        <location>Plastid</location>
        <location>Chloroplast</location>
    </subcellularLocation>
</comment>
<comment type="similarity">
    <text evidence="1">Belongs to the ycf15 family.</text>
</comment>
<comment type="caution">
    <text evidence="1">Could be the product of a pseudogene.</text>
</comment>
<feature type="chain" id="PRO_0000360386" description="Putative uncharacterized protein ycf15">
    <location>
        <begin position="1"/>
        <end position="77"/>
    </location>
</feature>
<keyword id="KW-0150">Chloroplast</keyword>
<keyword id="KW-0934">Plastid</keyword>
<name>YCF15_LEPVR</name>
<geneLocation type="chloroplast"/>
<dbReference type="EMBL" id="AP009374">
    <property type="protein sequence ID" value="BAF50505.1"/>
    <property type="molecule type" value="Genomic_DNA"/>
</dbReference>
<dbReference type="EMBL" id="AP009374">
    <property type="protein sequence ID" value="BAF50526.1"/>
    <property type="molecule type" value="Genomic_DNA"/>
</dbReference>
<dbReference type="GO" id="GO:0009507">
    <property type="term" value="C:chloroplast"/>
    <property type="evidence" value="ECO:0007669"/>
    <property type="project" value="UniProtKB-SubCell"/>
</dbReference>
<dbReference type="InterPro" id="IPR019645">
    <property type="entry name" value="Uncharacterised_Ycf15"/>
</dbReference>
<dbReference type="Pfam" id="PF10705">
    <property type="entry name" value="Ycf15"/>
    <property type="match status" value="1"/>
</dbReference>
<organism>
    <name type="scientific">Lepidium virginicum</name>
    <name type="common">Virginia pepperweed</name>
    <dbReference type="NCBI Taxonomy" id="59292"/>
    <lineage>
        <taxon>Eukaryota</taxon>
        <taxon>Viridiplantae</taxon>
        <taxon>Streptophyta</taxon>
        <taxon>Embryophyta</taxon>
        <taxon>Tracheophyta</taxon>
        <taxon>Spermatophyta</taxon>
        <taxon>Magnoliopsida</taxon>
        <taxon>eudicotyledons</taxon>
        <taxon>Gunneridae</taxon>
        <taxon>Pentapetalae</taxon>
        <taxon>rosids</taxon>
        <taxon>malvids</taxon>
        <taxon>Brassicales</taxon>
        <taxon>Brassicaceae</taxon>
        <taxon>Lepidieae</taxon>
        <taxon>Lepidium</taxon>
    </lineage>
</organism>
<evidence type="ECO:0000305" key="1"/>
<proteinExistence type="uncertain"/>
<accession>A4QLF0</accession>
<sequence length="77" mass="9050">MLLLKHGRIEILDQNTMYGWYELPKQEFLNSEQPELLLTTSKKFPLMKDGNPLENQKYACRMKLLLLSVPITNQLNN</sequence>
<gene>
    <name type="primary">ycf15-A</name>
</gene>
<gene>
    <name type="primary">ycf15-B</name>
</gene>
<reference key="1">
    <citation type="submission" date="2007-03" db="EMBL/GenBank/DDBJ databases">
        <title>Sequencing analysis of Lepidium virginicum JO26 chloroplast DNA.</title>
        <authorList>
            <person name="Hosouchi T."/>
            <person name="Tsuruoka H."/>
            <person name="Kotani H."/>
        </authorList>
    </citation>
    <scope>NUCLEOTIDE SEQUENCE [LARGE SCALE GENOMIC DNA]</scope>
</reference>